<dbReference type="EC" id="1.9.6.1" evidence="1"/>
<dbReference type="EMBL" id="CP000880">
    <property type="protein sequence ID" value="ABX20555.1"/>
    <property type="molecule type" value="Genomic_DNA"/>
</dbReference>
<dbReference type="SMR" id="A9MJZ6"/>
<dbReference type="STRING" id="41514.SARI_00631"/>
<dbReference type="KEGG" id="ses:SARI_00631"/>
<dbReference type="HOGENOM" id="CLU_000422_13_4_6"/>
<dbReference type="Proteomes" id="UP000002084">
    <property type="component" value="Chromosome"/>
</dbReference>
<dbReference type="GO" id="GO:0016020">
    <property type="term" value="C:membrane"/>
    <property type="evidence" value="ECO:0007669"/>
    <property type="project" value="TreeGrafter"/>
</dbReference>
<dbReference type="GO" id="GO:0009325">
    <property type="term" value="C:nitrate reductase complex"/>
    <property type="evidence" value="ECO:0007669"/>
    <property type="project" value="TreeGrafter"/>
</dbReference>
<dbReference type="GO" id="GO:0042597">
    <property type="term" value="C:periplasmic space"/>
    <property type="evidence" value="ECO:0007669"/>
    <property type="project" value="UniProtKB-SubCell"/>
</dbReference>
<dbReference type="GO" id="GO:0051539">
    <property type="term" value="F:4 iron, 4 sulfur cluster binding"/>
    <property type="evidence" value="ECO:0007669"/>
    <property type="project" value="UniProtKB-KW"/>
</dbReference>
<dbReference type="GO" id="GO:0009055">
    <property type="term" value="F:electron transfer activity"/>
    <property type="evidence" value="ECO:0007669"/>
    <property type="project" value="UniProtKB-UniRule"/>
</dbReference>
<dbReference type="GO" id="GO:0005506">
    <property type="term" value="F:iron ion binding"/>
    <property type="evidence" value="ECO:0007669"/>
    <property type="project" value="UniProtKB-UniRule"/>
</dbReference>
<dbReference type="GO" id="GO:0030151">
    <property type="term" value="F:molybdenum ion binding"/>
    <property type="evidence" value="ECO:0007669"/>
    <property type="project" value="InterPro"/>
</dbReference>
<dbReference type="GO" id="GO:0043546">
    <property type="term" value="F:molybdopterin cofactor binding"/>
    <property type="evidence" value="ECO:0007669"/>
    <property type="project" value="InterPro"/>
</dbReference>
<dbReference type="GO" id="GO:0050140">
    <property type="term" value="F:nitrate reductase (cytochrome) activity"/>
    <property type="evidence" value="ECO:0007669"/>
    <property type="project" value="UniProtKB-EC"/>
</dbReference>
<dbReference type="GO" id="GO:0045333">
    <property type="term" value="P:cellular respiration"/>
    <property type="evidence" value="ECO:0007669"/>
    <property type="project" value="UniProtKB-ARBA"/>
</dbReference>
<dbReference type="GO" id="GO:0006777">
    <property type="term" value="P:Mo-molybdopterin cofactor biosynthetic process"/>
    <property type="evidence" value="ECO:0007669"/>
    <property type="project" value="UniProtKB-UniRule"/>
</dbReference>
<dbReference type="GO" id="GO:0042128">
    <property type="term" value="P:nitrate assimilation"/>
    <property type="evidence" value="ECO:0007669"/>
    <property type="project" value="UniProtKB-UniRule"/>
</dbReference>
<dbReference type="CDD" id="cd02791">
    <property type="entry name" value="MopB_CT_Nitrate-R-NapA-like"/>
    <property type="match status" value="1"/>
</dbReference>
<dbReference type="CDD" id="cd02754">
    <property type="entry name" value="MopB_Nitrate-R-NapA-like"/>
    <property type="match status" value="1"/>
</dbReference>
<dbReference type="FunFam" id="2.40.40.20:FF:000005">
    <property type="entry name" value="Periplasmic nitrate reductase"/>
    <property type="match status" value="1"/>
</dbReference>
<dbReference type="FunFam" id="3.40.228.10:FF:000001">
    <property type="entry name" value="Periplasmic nitrate reductase"/>
    <property type="match status" value="1"/>
</dbReference>
<dbReference type="Gene3D" id="2.40.40.20">
    <property type="match status" value="1"/>
</dbReference>
<dbReference type="Gene3D" id="3.30.200.210">
    <property type="match status" value="1"/>
</dbReference>
<dbReference type="Gene3D" id="3.40.50.740">
    <property type="match status" value="1"/>
</dbReference>
<dbReference type="Gene3D" id="3.40.228.10">
    <property type="entry name" value="Dimethylsulfoxide Reductase, domain 2"/>
    <property type="match status" value="1"/>
</dbReference>
<dbReference type="HAMAP" id="MF_01630">
    <property type="entry name" value="Nitrate_reduct_NapA"/>
    <property type="match status" value="1"/>
</dbReference>
<dbReference type="InterPro" id="IPR009010">
    <property type="entry name" value="Asp_de-COase-like_dom_sf"/>
</dbReference>
<dbReference type="InterPro" id="IPR041957">
    <property type="entry name" value="CT_Nitrate-R-NapA-like"/>
</dbReference>
<dbReference type="InterPro" id="IPR006657">
    <property type="entry name" value="MoPterin_dinucl-bd_dom"/>
</dbReference>
<dbReference type="InterPro" id="IPR006656">
    <property type="entry name" value="Mopterin_OxRdtase"/>
</dbReference>
<dbReference type="InterPro" id="IPR006963">
    <property type="entry name" value="Mopterin_OxRdtase_4Fe-4S_dom"/>
</dbReference>
<dbReference type="InterPro" id="IPR027467">
    <property type="entry name" value="MopterinOxRdtase_cofactor_BS"/>
</dbReference>
<dbReference type="InterPro" id="IPR010051">
    <property type="entry name" value="Periplasm_NO3_reductase_lsu"/>
</dbReference>
<dbReference type="InterPro" id="IPR050123">
    <property type="entry name" value="Prok_molybdopt-oxidoreductase"/>
</dbReference>
<dbReference type="InterPro" id="IPR006311">
    <property type="entry name" value="TAT_signal"/>
</dbReference>
<dbReference type="InterPro" id="IPR019546">
    <property type="entry name" value="TAT_signal_bac_arc"/>
</dbReference>
<dbReference type="NCBIfam" id="TIGR01706">
    <property type="entry name" value="NAPA"/>
    <property type="match status" value="1"/>
</dbReference>
<dbReference type="NCBIfam" id="NF010055">
    <property type="entry name" value="PRK13532.1"/>
    <property type="match status" value="1"/>
</dbReference>
<dbReference type="NCBIfam" id="TIGR01409">
    <property type="entry name" value="TAT_signal_seq"/>
    <property type="match status" value="1"/>
</dbReference>
<dbReference type="PANTHER" id="PTHR43105:SF11">
    <property type="entry name" value="PERIPLASMIC NITRATE REDUCTASE"/>
    <property type="match status" value="1"/>
</dbReference>
<dbReference type="PANTHER" id="PTHR43105">
    <property type="entry name" value="RESPIRATORY NITRATE REDUCTASE"/>
    <property type="match status" value="1"/>
</dbReference>
<dbReference type="Pfam" id="PF04879">
    <property type="entry name" value="Molybdop_Fe4S4"/>
    <property type="match status" value="1"/>
</dbReference>
<dbReference type="Pfam" id="PF00384">
    <property type="entry name" value="Molybdopterin"/>
    <property type="match status" value="1"/>
</dbReference>
<dbReference type="Pfam" id="PF01568">
    <property type="entry name" value="Molydop_binding"/>
    <property type="match status" value="1"/>
</dbReference>
<dbReference type="SMART" id="SM00926">
    <property type="entry name" value="Molybdop_Fe4S4"/>
    <property type="match status" value="1"/>
</dbReference>
<dbReference type="SUPFAM" id="SSF50692">
    <property type="entry name" value="ADC-like"/>
    <property type="match status" value="1"/>
</dbReference>
<dbReference type="SUPFAM" id="SSF53706">
    <property type="entry name" value="Formate dehydrogenase/DMSO reductase, domains 1-3"/>
    <property type="match status" value="1"/>
</dbReference>
<dbReference type="PROSITE" id="PS51669">
    <property type="entry name" value="4FE4S_MOW_BIS_MGD"/>
    <property type="match status" value="1"/>
</dbReference>
<dbReference type="PROSITE" id="PS00551">
    <property type="entry name" value="MOLYBDOPTERIN_PROK_1"/>
    <property type="match status" value="1"/>
</dbReference>
<dbReference type="PROSITE" id="PS51318">
    <property type="entry name" value="TAT"/>
    <property type="match status" value="1"/>
</dbReference>
<organism>
    <name type="scientific">Salmonella arizonae (strain ATCC BAA-731 / CDC346-86 / RSK2980)</name>
    <dbReference type="NCBI Taxonomy" id="41514"/>
    <lineage>
        <taxon>Bacteria</taxon>
        <taxon>Pseudomonadati</taxon>
        <taxon>Pseudomonadota</taxon>
        <taxon>Gammaproteobacteria</taxon>
        <taxon>Enterobacterales</taxon>
        <taxon>Enterobacteriaceae</taxon>
        <taxon>Salmonella</taxon>
    </lineage>
</organism>
<reference key="1">
    <citation type="submission" date="2007-11" db="EMBL/GenBank/DDBJ databases">
        <authorList>
            <consortium name="The Salmonella enterica serovar Arizonae Genome Sequencing Project"/>
            <person name="McClelland M."/>
            <person name="Sanderson E.K."/>
            <person name="Porwollik S."/>
            <person name="Spieth J."/>
            <person name="Clifton W.S."/>
            <person name="Fulton R."/>
            <person name="Chunyan W."/>
            <person name="Wollam A."/>
            <person name="Shah N."/>
            <person name="Pepin K."/>
            <person name="Bhonagiri V."/>
            <person name="Nash W."/>
            <person name="Johnson M."/>
            <person name="Thiruvilangam P."/>
            <person name="Wilson R."/>
        </authorList>
    </citation>
    <scope>NUCLEOTIDE SEQUENCE [LARGE SCALE GENOMIC DNA]</scope>
    <source>
        <strain>ATCC BAA-731 / CDC346-86 / RSK2980</strain>
    </source>
</reference>
<comment type="function">
    <text evidence="1">Catalytic subunit of the periplasmic nitrate reductase complex NapAB. Receives electrons from NapB and catalyzes the reduction of nitrate to nitrite.</text>
</comment>
<comment type="catalytic activity">
    <reaction evidence="1">
        <text>2 Fe(II)-[cytochrome] + nitrate + 2 H(+) = 2 Fe(III)-[cytochrome] + nitrite + H2O</text>
        <dbReference type="Rhea" id="RHEA:12909"/>
        <dbReference type="Rhea" id="RHEA-COMP:11777"/>
        <dbReference type="Rhea" id="RHEA-COMP:11778"/>
        <dbReference type="ChEBI" id="CHEBI:15377"/>
        <dbReference type="ChEBI" id="CHEBI:15378"/>
        <dbReference type="ChEBI" id="CHEBI:16301"/>
        <dbReference type="ChEBI" id="CHEBI:17632"/>
        <dbReference type="ChEBI" id="CHEBI:29033"/>
        <dbReference type="ChEBI" id="CHEBI:29034"/>
        <dbReference type="EC" id="1.9.6.1"/>
    </reaction>
</comment>
<comment type="cofactor">
    <cofactor evidence="1">
        <name>[4Fe-4S] cluster</name>
        <dbReference type="ChEBI" id="CHEBI:49883"/>
    </cofactor>
    <text evidence="1">Binds 1 [4Fe-4S] cluster.</text>
</comment>
<comment type="cofactor">
    <cofactor evidence="1">
        <name>Mo-bis(molybdopterin guanine dinucleotide)</name>
        <dbReference type="ChEBI" id="CHEBI:60539"/>
    </cofactor>
    <text evidence="1">Binds 1 molybdenum-bis(molybdopterin guanine dinucleotide) (Mo-bis-MGD) cofactor per subunit.</text>
</comment>
<comment type="subunit">
    <text evidence="1">Component of the periplasmic nitrate reductase NapAB complex composed of NapA and NapB.</text>
</comment>
<comment type="subcellular location">
    <subcellularLocation>
        <location evidence="1">Periplasm</location>
    </subcellularLocation>
</comment>
<comment type="PTM">
    <text evidence="1">Predicted to be exported by the Tat system. The position of the signal peptide cleavage has not been experimentally proven.</text>
</comment>
<comment type="similarity">
    <text evidence="1">Belongs to the prokaryotic molybdopterin-containing oxidoreductase family. NasA/NapA/NarB subfamily.</text>
</comment>
<evidence type="ECO:0000255" key="1">
    <source>
        <dbReference type="HAMAP-Rule" id="MF_01630"/>
    </source>
</evidence>
<accession>A9MJZ6</accession>
<proteinExistence type="inferred from homology"/>
<keyword id="KW-0004">4Fe-4S</keyword>
<keyword id="KW-0249">Electron transport</keyword>
<keyword id="KW-0408">Iron</keyword>
<keyword id="KW-0411">Iron-sulfur</keyword>
<keyword id="KW-0479">Metal-binding</keyword>
<keyword id="KW-0500">Molybdenum</keyword>
<keyword id="KW-0534">Nitrate assimilation</keyword>
<keyword id="KW-0560">Oxidoreductase</keyword>
<keyword id="KW-0574">Periplasm</keyword>
<keyword id="KW-1185">Reference proteome</keyword>
<keyword id="KW-0732">Signal</keyword>
<keyword id="KW-0813">Transport</keyword>
<gene>
    <name evidence="1" type="primary">napA</name>
    <name type="ordered locus">SARI_00631</name>
</gene>
<name>NAPA_SALAR</name>
<feature type="signal peptide" description="Tat-type signal" evidence="1">
    <location>
        <begin position="1"/>
        <end position="31"/>
    </location>
</feature>
<feature type="chain" id="PRO_1000088118" description="Periplasmic nitrate reductase" evidence="1">
    <location>
        <begin position="32"/>
        <end position="828"/>
    </location>
</feature>
<feature type="domain" description="4Fe-4S Mo/W bis-MGD-type" evidence="1">
    <location>
        <begin position="39"/>
        <end position="95"/>
    </location>
</feature>
<feature type="binding site" evidence="1">
    <location>
        <position position="46"/>
    </location>
    <ligand>
        <name>[4Fe-4S] cluster</name>
        <dbReference type="ChEBI" id="CHEBI:49883"/>
    </ligand>
</feature>
<feature type="binding site" evidence="1">
    <location>
        <position position="49"/>
    </location>
    <ligand>
        <name>[4Fe-4S] cluster</name>
        <dbReference type="ChEBI" id="CHEBI:49883"/>
    </ligand>
</feature>
<feature type="binding site" evidence="1">
    <location>
        <position position="53"/>
    </location>
    <ligand>
        <name>[4Fe-4S] cluster</name>
        <dbReference type="ChEBI" id="CHEBI:49883"/>
    </ligand>
</feature>
<feature type="binding site" evidence="1">
    <location>
        <position position="81"/>
    </location>
    <ligand>
        <name>[4Fe-4S] cluster</name>
        <dbReference type="ChEBI" id="CHEBI:49883"/>
    </ligand>
</feature>
<feature type="binding site" evidence="1">
    <location>
        <position position="83"/>
    </location>
    <ligand>
        <name>Mo-bis(molybdopterin guanine dinucleotide)</name>
        <dbReference type="ChEBI" id="CHEBI:60539"/>
    </ligand>
</feature>
<feature type="binding site" evidence="1">
    <location>
        <position position="150"/>
    </location>
    <ligand>
        <name>Mo-bis(molybdopterin guanine dinucleotide)</name>
        <dbReference type="ChEBI" id="CHEBI:60539"/>
    </ligand>
</feature>
<feature type="binding site" evidence="1">
    <location>
        <position position="175"/>
    </location>
    <ligand>
        <name>Mo-bis(molybdopterin guanine dinucleotide)</name>
        <dbReference type="ChEBI" id="CHEBI:60539"/>
    </ligand>
</feature>
<feature type="binding site" evidence="1">
    <location>
        <position position="179"/>
    </location>
    <ligand>
        <name>Mo-bis(molybdopterin guanine dinucleotide)</name>
        <dbReference type="ChEBI" id="CHEBI:60539"/>
    </ligand>
</feature>
<feature type="binding site" evidence="1">
    <location>
        <begin position="212"/>
        <end position="219"/>
    </location>
    <ligand>
        <name>Mo-bis(molybdopterin guanine dinucleotide)</name>
        <dbReference type="ChEBI" id="CHEBI:60539"/>
    </ligand>
</feature>
<feature type="binding site" evidence="1">
    <location>
        <begin position="243"/>
        <end position="247"/>
    </location>
    <ligand>
        <name>Mo-bis(molybdopterin guanine dinucleotide)</name>
        <dbReference type="ChEBI" id="CHEBI:60539"/>
    </ligand>
</feature>
<feature type="binding site" evidence="1">
    <location>
        <begin position="262"/>
        <end position="264"/>
    </location>
    <ligand>
        <name>Mo-bis(molybdopterin guanine dinucleotide)</name>
        <dbReference type="ChEBI" id="CHEBI:60539"/>
    </ligand>
</feature>
<feature type="binding site" evidence="1">
    <location>
        <position position="372"/>
    </location>
    <ligand>
        <name>Mo-bis(molybdopterin guanine dinucleotide)</name>
        <dbReference type="ChEBI" id="CHEBI:60539"/>
    </ligand>
</feature>
<feature type="binding site" evidence="1">
    <location>
        <position position="376"/>
    </location>
    <ligand>
        <name>Mo-bis(molybdopterin guanine dinucleotide)</name>
        <dbReference type="ChEBI" id="CHEBI:60539"/>
    </ligand>
</feature>
<feature type="binding site" evidence="1">
    <location>
        <position position="482"/>
    </location>
    <ligand>
        <name>Mo-bis(molybdopterin guanine dinucleotide)</name>
        <dbReference type="ChEBI" id="CHEBI:60539"/>
    </ligand>
</feature>
<feature type="binding site" evidence="1">
    <location>
        <begin position="508"/>
        <end position="509"/>
    </location>
    <ligand>
        <name>Mo-bis(molybdopterin guanine dinucleotide)</name>
        <dbReference type="ChEBI" id="CHEBI:60539"/>
    </ligand>
</feature>
<feature type="binding site" evidence="1">
    <location>
        <position position="531"/>
    </location>
    <ligand>
        <name>Mo-bis(molybdopterin guanine dinucleotide)</name>
        <dbReference type="ChEBI" id="CHEBI:60539"/>
    </ligand>
</feature>
<feature type="binding site" evidence="1">
    <location>
        <position position="558"/>
    </location>
    <ligand>
        <name>Mo-bis(molybdopterin guanine dinucleotide)</name>
        <dbReference type="ChEBI" id="CHEBI:60539"/>
    </ligand>
</feature>
<feature type="binding site" evidence="1">
    <location>
        <begin position="718"/>
        <end position="727"/>
    </location>
    <ligand>
        <name>Mo-bis(molybdopterin guanine dinucleotide)</name>
        <dbReference type="ChEBI" id="CHEBI:60539"/>
    </ligand>
</feature>
<feature type="binding site" evidence="1">
    <location>
        <position position="794"/>
    </location>
    <ligand>
        <name>substrate</name>
    </ligand>
</feature>
<feature type="binding site" evidence="1">
    <location>
        <position position="802"/>
    </location>
    <ligand>
        <name>Mo-bis(molybdopterin guanine dinucleotide)</name>
        <dbReference type="ChEBI" id="CHEBI:60539"/>
    </ligand>
</feature>
<feature type="binding site" evidence="1">
    <location>
        <position position="819"/>
    </location>
    <ligand>
        <name>Mo-bis(molybdopterin guanine dinucleotide)</name>
        <dbReference type="ChEBI" id="CHEBI:60539"/>
    </ligand>
</feature>
<sequence>MKLSRRSFMKANAVAAAAAAAGLSVPGVARAVVGQQEAIKWDKAPCRFCGTGCGVLVGTQQGRVVACQGDPDAPVNRGLNCIKGYFLPKIMYGKDRLTQPMLRMKDGKYHKDGEFTPVSWDQAFDVMEEKFKTSLKEKGPEAIGMFGSGQWTIWEGYAAAKLFKAGFRSNNIDPNARHCMASAVVGFMRTFGMDEPMGCYDDIEQADAFVLWGSNMAEMHPILWSRITNRRLSDPNVKVAVLSTFQHRSFELADNGIVFTPQSDLMILNYIANYIIQHDAVNQDFFTKHVNLRKGATDIGYGLRPTHPLEKAAKNPGSDASGPMSFDEYKAFVAEYTLDKTAAMTGVPKDQLEQLAQLYADPNKRVISYWTMGFNQHTRGVWANNLVYNLHLLTGKISQPGCGPFSLTGQPSACGTAREVGTFSHRLPADMVVTNEKHRDICEKHWQIPAGTIPAKVGLHAVAQDRALKDGKLNVYWVMCNNNMQAGPNINEDRMPGWRDPRNFIIVSDPYPTVSALSADLILPTAMWVEKEGAYGNAERRTQFWRQQIKAPGEAKSDLWQLVQFSRRFKTEEVWPEALLAQKPELRGKTLYDVLFATPAVSKFPLSELKEDQLNDESRELGFYLQKGLFEEYAWFGRGHGHDLAPFDDYHNARGLRWPVVDGKETQWRYSEGNDPYVKAGEGYKFYGKPDGKAVIFALPFEPAAESPDNEYDLWLSTGRVLEHWHTGSMTRRVPELHRAFPEAVVFIHPLDAKARDLRRGDKVKVSSRRGEVISFVETRGRNRPPQGLVYMPFFDAAQLVNNLTLDATDPLSKETDFKKCAVKLAKV</sequence>
<protein>
    <recommendedName>
        <fullName evidence="1">Periplasmic nitrate reductase</fullName>
        <ecNumber evidence="1">1.9.6.1</ecNumber>
    </recommendedName>
</protein>